<feature type="chain" id="PRO_1000187632" description="Membrane protein insertase YidC">
    <location>
        <begin position="1"/>
        <end position="545"/>
    </location>
</feature>
<feature type="transmembrane region" description="Helical" evidence="1">
    <location>
        <begin position="10"/>
        <end position="30"/>
    </location>
</feature>
<feature type="transmembrane region" description="Helical" evidence="1">
    <location>
        <begin position="319"/>
        <end position="339"/>
    </location>
</feature>
<feature type="transmembrane region" description="Helical" evidence="1">
    <location>
        <begin position="341"/>
        <end position="361"/>
    </location>
</feature>
<feature type="transmembrane region" description="Helical" evidence="1">
    <location>
        <begin position="407"/>
        <end position="427"/>
    </location>
</feature>
<feature type="transmembrane region" description="Helical" evidence="1">
    <location>
        <begin position="467"/>
        <end position="487"/>
    </location>
</feature>
<feature type="transmembrane region" description="Helical" evidence="1">
    <location>
        <begin position="502"/>
        <end position="522"/>
    </location>
</feature>
<proteinExistence type="inferred from homology"/>
<protein>
    <recommendedName>
        <fullName evidence="1">Membrane protein insertase YidC</fullName>
    </recommendedName>
    <alternativeName>
        <fullName evidence="1">Foldase YidC</fullName>
    </alternativeName>
    <alternativeName>
        <fullName evidence="1">Membrane integrase YidC</fullName>
    </alternativeName>
    <alternativeName>
        <fullName evidence="1">Membrane protein YidC</fullName>
    </alternativeName>
</protein>
<gene>
    <name evidence="1" type="primary">yidC</name>
    <name type="ordered locus">BDU_440</name>
</gene>
<accession>B5RLZ9</accession>
<organism>
    <name type="scientific">Borrelia duttonii (strain Ly)</name>
    <dbReference type="NCBI Taxonomy" id="412419"/>
    <lineage>
        <taxon>Bacteria</taxon>
        <taxon>Pseudomonadati</taxon>
        <taxon>Spirochaetota</taxon>
        <taxon>Spirochaetia</taxon>
        <taxon>Spirochaetales</taxon>
        <taxon>Borreliaceae</taxon>
        <taxon>Borrelia</taxon>
    </lineage>
</organism>
<keyword id="KW-0997">Cell inner membrane</keyword>
<keyword id="KW-1003">Cell membrane</keyword>
<keyword id="KW-0143">Chaperone</keyword>
<keyword id="KW-0472">Membrane</keyword>
<keyword id="KW-0653">Protein transport</keyword>
<keyword id="KW-0812">Transmembrane</keyword>
<keyword id="KW-1133">Transmembrane helix</keyword>
<keyword id="KW-0813">Transport</keyword>
<sequence length="545" mass="63741">MSPNKRILRAVYLSLFFIGIFMLLDDFLFSRKASSFMNEEIKFDLNKDFDIDNSLIDEDFTFNLSDNSEDINVDTDIYHATFATFGGNLISLKLKNHLNLDKKPTEIVKMHPQNQSLFYITLDKLSKSLFLYEQIDSHVHDFKTNVEVNGKYYEYIKRYTFSKSNEYLIKLEIFLNNIDVNDDIGIDFYKFVLNSGIEELSAKGKLQYNNYLSHAIYYDTKLRYGKDGLNIANPKWVGAGTKYFEVLVSKENMKVEFKHENKVLNAFILNKLDNKNVSDVFYIYAGPRDNKYLDIFNQRELNSFGLSNVEFGMSVEKSLLYFLQVPMQLIMQIFYNVIPNWGLSIMFLTIVVRILIFPLTFKSFRATAELSKLQPKMKEIQVKFKSDPKRLNEEMSKLYREEGVNPIGGCFPILLQLPVFFALYGLVNNFFVLRGASFIPGWIDDLSIGDSIYYFGYKVFAWTDIRILPFIMMITQLLSTIVSSNVSFKSLGAQQKFLYFGMPIMFFFILYDMPSGLLIYWITTNIFTILQQYYIKMNLSERRNK</sequence>
<name>YIDC_BORDL</name>
<evidence type="ECO:0000255" key="1">
    <source>
        <dbReference type="HAMAP-Rule" id="MF_01810"/>
    </source>
</evidence>
<reference key="1">
    <citation type="journal article" date="2008" name="PLoS Genet.">
        <title>The genome of Borrelia recurrentis, the agent of deadly louse-borne relapsing fever, is a degraded subset of tick-borne Borrelia duttonii.</title>
        <authorList>
            <person name="Lescot M."/>
            <person name="Audic S."/>
            <person name="Robert C."/>
            <person name="Nguyen T.T."/>
            <person name="Blanc G."/>
            <person name="Cutler S.J."/>
            <person name="Wincker P."/>
            <person name="Couloux A."/>
            <person name="Claverie J.-M."/>
            <person name="Raoult D."/>
            <person name="Drancourt M."/>
        </authorList>
    </citation>
    <scope>NUCLEOTIDE SEQUENCE [LARGE SCALE GENOMIC DNA]</scope>
    <source>
        <strain>Ly</strain>
    </source>
</reference>
<comment type="function">
    <text evidence="1">Required for the insertion and/or proper folding and/or complex formation of integral membrane proteins into the membrane. Involved in integration of membrane proteins that insert both dependently and independently of the Sec translocase complex, as well as at least some lipoproteins. Aids folding of multispanning membrane proteins.</text>
</comment>
<comment type="subunit">
    <text evidence="1">Interacts with the Sec translocase complex via SecD. Specifically interacts with transmembrane segments of nascent integral membrane proteins during membrane integration.</text>
</comment>
<comment type="subcellular location">
    <subcellularLocation>
        <location evidence="1">Cell inner membrane</location>
        <topology evidence="1">Multi-pass membrane protein</topology>
    </subcellularLocation>
</comment>
<comment type="similarity">
    <text evidence="1">Belongs to the OXA1/ALB3/YidC family. Type 1 subfamily.</text>
</comment>
<dbReference type="EMBL" id="CP000976">
    <property type="protein sequence ID" value="ACH93385.1"/>
    <property type="molecule type" value="Genomic_DNA"/>
</dbReference>
<dbReference type="RefSeq" id="WP_012538196.1">
    <property type="nucleotide sequence ID" value="NC_011229.1"/>
</dbReference>
<dbReference type="SMR" id="B5RLZ9"/>
<dbReference type="STRING" id="412419.BDU_440"/>
<dbReference type="KEGG" id="bdu:BDU_440"/>
<dbReference type="eggNOG" id="COG0706">
    <property type="taxonomic scope" value="Bacteria"/>
</dbReference>
<dbReference type="HOGENOM" id="CLU_016535_2_0_12"/>
<dbReference type="OrthoDB" id="9780552at2"/>
<dbReference type="Proteomes" id="UP000000611">
    <property type="component" value="Chromosome"/>
</dbReference>
<dbReference type="GO" id="GO:0005886">
    <property type="term" value="C:plasma membrane"/>
    <property type="evidence" value="ECO:0007669"/>
    <property type="project" value="UniProtKB-SubCell"/>
</dbReference>
<dbReference type="GO" id="GO:0032977">
    <property type="term" value="F:membrane insertase activity"/>
    <property type="evidence" value="ECO:0007669"/>
    <property type="project" value="InterPro"/>
</dbReference>
<dbReference type="GO" id="GO:0051205">
    <property type="term" value="P:protein insertion into membrane"/>
    <property type="evidence" value="ECO:0007669"/>
    <property type="project" value="TreeGrafter"/>
</dbReference>
<dbReference type="GO" id="GO:0015031">
    <property type="term" value="P:protein transport"/>
    <property type="evidence" value="ECO:0007669"/>
    <property type="project" value="UniProtKB-KW"/>
</dbReference>
<dbReference type="CDD" id="cd20070">
    <property type="entry name" value="5TM_YidC_Alb3"/>
    <property type="match status" value="1"/>
</dbReference>
<dbReference type="CDD" id="cd19961">
    <property type="entry name" value="EcYidC-like_peri"/>
    <property type="match status" value="1"/>
</dbReference>
<dbReference type="Gene3D" id="2.70.98.90">
    <property type="match status" value="1"/>
</dbReference>
<dbReference type="HAMAP" id="MF_01810">
    <property type="entry name" value="YidC_type1"/>
    <property type="match status" value="1"/>
</dbReference>
<dbReference type="InterPro" id="IPR019998">
    <property type="entry name" value="Membr_insert_YidC"/>
</dbReference>
<dbReference type="InterPro" id="IPR028053">
    <property type="entry name" value="Membr_insert_YidC_N"/>
</dbReference>
<dbReference type="InterPro" id="IPR001708">
    <property type="entry name" value="YidC/ALB3/OXA1/COX18"/>
</dbReference>
<dbReference type="InterPro" id="IPR028055">
    <property type="entry name" value="YidC/Oxa/ALB_C"/>
</dbReference>
<dbReference type="InterPro" id="IPR047196">
    <property type="entry name" value="YidC_ALB_C"/>
</dbReference>
<dbReference type="InterPro" id="IPR038221">
    <property type="entry name" value="YidC_periplasmic_sf"/>
</dbReference>
<dbReference type="NCBIfam" id="NF002358">
    <property type="entry name" value="PRK01318.2-5"/>
    <property type="match status" value="1"/>
</dbReference>
<dbReference type="NCBIfam" id="TIGR03592">
    <property type="entry name" value="yidC_oxa1_cterm"/>
    <property type="match status" value="1"/>
</dbReference>
<dbReference type="PANTHER" id="PTHR12428:SF65">
    <property type="entry name" value="CYTOCHROME C OXIDASE ASSEMBLY PROTEIN COX18, MITOCHONDRIAL"/>
    <property type="match status" value="1"/>
</dbReference>
<dbReference type="PANTHER" id="PTHR12428">
    <property type="entry name" value="OXA1"/>
    <property type="match status" value="1"/>
</dbReference>
<dbReference type="Pfam" id="PF02096">
    <property type="entry name" value="60KD_IMP"/>
    <property type="match status" value="1"/>
</dbReference>
<dbReference type="Pfam" id="PF14849">
    <property type="entry name" value="YidC_periplas"/>
    <property type="match status" value="1"/>
</dbReference>
<dbReference type="PRINTS" id="PR00701">
    <property type="entry name" value="60KDINNERMP"/>
</dbReference>
<dbReference type="PRINTS" id="PR01900">
    <property type="entry name" value="YIDCPROTEIN"/>
</dbReference>